<feature type="chain" id="PRO_0000355599" description="Peroxidase 7">
    <location>
        <begin position="1" status="less than"/>
        <end position="17" status="greater than"/>
    </location>
</feature>
<feature type="unsure residue" description="Q or K">
    <location>
        <position position="5"/>
    </location>
</feature>
<feature type="unsure residue" description="M or F">
    <location>
        <position position="9"/>
    </location>
</feature>
<feature type="unsure residue" description="K or Q">
    <location>
        <position position="11"/>
    </location>
</feature>
<feature type="unsure residue" description="F or M">
    <location>
        <position position="13"/>
    </location>
</feature>
<feature type="unsure residue" description="L or I">
    <location>
        <position position="17"/>
    </location>
</feature>
<feature type="non-terminal residue">
    <location>
        <position position="1"/>
    </location>
</feature>
<feature type="non-terminal residue">
    <location>
        <position position="17"/>
    </location>
</feature>
<reference evidence="3" key="1">
    <citation type="submission" date="2008-07" db="UniProtKB">
        <authorList>
            <person name="Almagro L."/>
            <person name="Ros Barcelo A."/>
            <person name="Pedreno M.A."/>
        </authorList>
    </citation>
    <scope>PROTEIN SEQUENCE</scope>
</reference>
<comment type="function">
    <text evidence="2">Removal of H(2)O(2), oxidation of toxic reductants, biosynthesis and degradation of lignin, suberization, auxin catabolism, response to environmental stresses such as wounding, pathogen attack and oxidative stress. These functions might be dependent on each isozyme/isoform in each plant tissue.</text>
</comment>
<comment type="catalytic activity">
    <reaction>
        <text>2 a phenolic donor + H2O2 = 2 a phenolic radical donor + 2 H2O</text>
        <dbReference type="Rhea" id="RHEA:56136"/>
        <dbReference type="ChEBI" id="CHEBI:15377"/>
        <dbReference type="ChEBI" id="CHEBI:16240"/>
        <dbReference type="ChEBI" id="CHEBI:139520"/>
        <dbReference type="ChEBI" id="CHEBI:139521"/>
        <dbReference type="EC" id="1.11.1.7"/>
    </reaction>
</comment>
<comment type="cofactor">
    <cofactor evidence="1 2">
        <name>Ca(2+)</name>
        <dbReference type="ChEBI" id="CHEBI:29108"/>
    </cofactor>
    <text evidence="1 2">Binds 2 calcium ions per subunit.</text>
</comment>
<comment type="cofactor">
    <cofactor evidence="1 2">
        <name>heme b</name>
        <dbReference type="ChEBI" id="CHEBI:60344"/>
    </cofactor>
    <text evidence="1 2">Binds 1 heme b (iron(II)-protoporphyrin IX) group per subunit.</text>
</comment>
<comment type="similarity">
    <text evidence="2">Belongs to the peroxidase family. Classical plant (class III) peroxidase subfamily.</text>
</comment>
<dbReference type="EC" id="1.11.1.7"/>
<dbReference type="GO" id="GO:0140825">
    <property type="term" value="F:lactoperoxidase activity"/>
    <property type="evidence" value="ECO:0007669"/>
    <property type="project" value="UniProtKB-EC"/>
</dbReference>
<dbReference type="GO" id="GO:0046872">
    <property type="term" value="F:metal ion binding"/>
    <property type="evidence" value="ECO:0007669"/>
    <property type="project" value="UniProtKB-KW"/>
</dbReference>
<dbReference type="GO" id="GO:0042744">
    <property type="term" value="P:hydrogen peroxide catabolic process"/>
    <property type="evidence" value="ECO:0007669"/>
    <property type="project" value="UniProtKB-KW"/>
</dbReference>
<evidence type="ECO:0000250" key="1">
    <source>
        <dbReference type="UniProtKB" id="Q96520"/>
    </source>
</evidence>
<evidence type="ECO:0000255" key="2">
    <source>
        <dbReference type="PROSITE-ProRule" id="PRU00297"/>
    </source>
</evidence>
<evidence type="ECO:0000305" key="3"/>
<protein>
    <recommendedName>
        <fullName evidence="1">Peroxidase 7</fullName>
        <ecNumber>1.11.1.7</ecNumber>
    </recommendedName>
</protein>
<sequence>NYPTQDSTMDKTFANNL</sequence>
<proteinExistence type="evidence at protein level"/>
<accession>P86063</accession>
<keyword id="KW-0106">Calcium</keyword>
<keyword id="KW-0903">Direct protein sequencing</keyword>
<keyword id="KW-0349">Heme</keyword>
<keyword id="KW-0376">Hydrogen peroxide</keyword>
<keyword id="KW-0408">Iron</keyword>
<keyword id="KW-0479">Metal-binding</keyword>
<keyword id="KW-0560">Oxidoreductase</keyword>
<keyword id="KW-0575">Peroxidase</keyword>
<name>PER7_DAUCA</name>
<organism>
    <name type="scientific">Daucus carota</name>
    <name type="common">Wild carrot</name>
    <dbReference type="NCBI Taxonomy" id="4039"/>
    <lineage>
        <taxon>Eukaryota</taxon>
        <taxon>Viridiplantae</taxon>
        <taxon>Streptophyta</taxon>
        <taxon>Embryophyta</taxon>
        <taxon>Tracheophyta</taxon>
        <taxon>Spermatophyta</taxon>
        <taxon>Magnoliopsida</taxon>
        <taxon>eudicotyledons</taxon>
        <taxon>Gunneridae</taxon>
        <taxon>Pentapetalae</taxon>
        <taxon>asterids</taxon>
        <taxon>campanulids</taxon>
        <taxon>Apiales</taxon>
        <taxon>Apiaceae</taxon>
        <taxon>Apioideae</taxon>
        <taxon>Scandiceae</taxon>
        <taxon>Daucinae</taxon>
        <taxon>Daucus</taxon>
        <taxon>Daucus sect. Daucus</taxon>
    </lineage>
</organism>